<reference key="1">
    <citation type="journal article" date="2000" name="Nature">
        <title>DNA sequence of both chromosomes of the cholera pathogen Vibrio cholerae.</title>
        <authorList>
            <person name="Heidelberg J.F."/>
            <person name="Eisen J.A."/>
            <person name="Nelson W.C."/>
            <person name="Clayton R.A."/>
            <person name="Gwinn M.L."/>
            <person name="Dodson R.J."/>
            <person name="Haft D.H."/>
            <person name="Hickey E.K."/>
            <person name="Peterson J.D."/>
            <person name="Umayam L.A."/>
            <person name="Gill S.R."/>
            <person name="Nelson K.E."/>
            <person name="Read T.D."/>
            <person name="Tettelin H."/>
            <person name="Richardson D.L."/>
            <person name="Ermolaeva M.D."/>
            <person name="Vamathevan J.J."/>
            <person name="Bass S."/>
            <person name="Qin H."/>
            <person name="Dragoi I."/>
            <person name="Sellers P."/>
            <person name="McDonald L.A."/>
            <person name="Utterback T.R."/>
            <person name="Fleischmann R.D."/>
            <person name="Nierman W.C."/>
            <person name="White O."/>
            <person name="Salzberg S.L."/>
            <person name="Smith H.O."/>
            <person name="Colwell R.R."/>
            <person name="Mekalanos J.J."/>
            <person name="Venter J.C."/>
            <person name="Fraser C.M."/>
        </authorList>
    </citation>
    <scope>NUCLEOTIDE SEQUENCE [LARGE SCALE GENOMIC DNA]</scope>
    <source>
        <strain>ATCC 39315 / El Tor Inaba N16961</strain>
    </source>
</reference>
<proteinExistence type="inferred from homology"/>
<feature type="chain" id="PRO_0000154743" description="Large ribosomal subunit protein uL10">
    <location>
        <begin position="1"/>
        <end position="162"/>
    </location>
</feature>
<name>RL10_VIBCH</name>
<protein>
    <recommendedName>
        <fullName evidence="2">Large ribosomal subunit protein uL10</fullName>
    </recommendedName>
    <alternativeName>
        <fullName>50S ribosomal protein L10</fullName>
    </alternativeName>
</protein>
<sequence>MALNLQDKKAIVAEVNEAASGALSAVVADSRGVQVAAMTNLRKQAREAGVYLKVVRNTLARRAVEGTAYECLKDVFVGPTLIGFSNEHPGAAARLFKDFAKENKAFEIKAAAFEGVLTDPEVLATLPTYDEAIARLMMCMKEASAGKLVRTIAAVRDQKEAA</sequence>
<gene>
    <name type="primary">rplJ</name>
    <name type="ordered locus">VC_0326</name>
</gene>
<organism>
    <name type="scientific">Vibrio cholerae serotype O1 (strain ATCC 39315 / El Tor Inaba N16961)</name>
    <dbReference type="NCBI Taxonomy" id="243277"/>
    <lineage>
        <taxon>Bacteria</taxon>
        <taxon>Pseudomonadati</taxon>
        <taxon>Pseudomonadota</taxon>
        <taxon>Gammaproteobacteria</taxon>
        <taxon>Vibrionales</taxon>
        <taxon>Vibrionaceae</taxon>
        <taxon>Vibrio</taxon>
    </lineage>
</organism>
<evidence type="ECO:0000250" key="1"/>
<evidence type="ECO:0000305" key="2"/>
<keyword id="KW-1185">Reference proteome</keyword>
<keyword id="KW-0687">Ribonucleoprotein</keyword>
<keyword id="KW-0689">Ribosomal protein</keyword>
<keyword id="KW-0694">RNA-binding</keyword>
<keyword id="KW-0699">rRNA-binding</keyword>
<dbReference type="EMBL" id="AE003852">
    <property type="protein sequence ID" value="AAF93499.1"/>
    <property type="molecule type" value="Genomic_DNA"/>
</dbReference>
<dbReference type="PIR" id="D82336">
    <property type="entry name" value="D82336"/>
</dbReference>
<dbReference type="RefSeq" id="NP_229980.1">
    <property type="nucleotide sequence ID" value="NC_002505.1"/>
</dbReference>
<dbReference type="RefSeq" id="WP_001207198.1">
    <property type="nucleotide sequence ID" value="NZ_LT906614.1"/>
</dbReference>
<dbReference type="STRING" id="243277.VC_0326"/>
<dbReference type="DNASU" id="2615092"/>
<dbReference type="EnsemblBacteria" id="AAF93499">
    <property type="protein sequence ID" value="AAF93499"/>
    <property type="gene ID" value="VC_0326"/>
</dbReference>
<dbReference type="GeneID" id="94014902"/>
<dbReference type="KEGG" id="vch:VC_0326"/>
<dbReference type="PATRIC" id="fig|243277.26.peg.303"/>
<dbReference type="eggNOG" id="COG0244">
    <property type="taxonomic scope" value="Bacteria"/>
</dbReference>
<dbReference type="HOGENOM" id="CLU_092227_0_2_6"/>
<dbReference type="Proteomes" id="UP000000584">
    <property type="component" value="Chromosome 1"/>
</dbReference>
<dbReference type="GO" id="GO:0022625">
    <property type="term" value="C:cytosolic large ribosomal subunit"/>
    <property type="evidence" value="ECO:0000318"/>
    <property type="project" value="GO_Central"/>
</dbReference>
<dbReference type="GO" id="GO:0070180">
    <property type="term" value="F:large ribosomal subunit rRNA binding"/>
    <property type="evidence" value="ECO:0007669"/>
    <property type="project" value="UniProtKB-UniRule"/>
</dbReference>
<dbReference type="GO" id="GO:0003735">
    <property type="term" value="F:structural constituent of ribosome"/>
    <property type="evidence" value="ECO:0000318"/>
    <property type="project" value="GO_Central"/>
</dbReference>
<dbReference type="GO" id="GO:0006412">
    <property type="term" value="P:translation"/>
    <property type="evidence" value="ECO:0000318"/>
    <property type="project" value="GO_Central"/>
</dbReference>
<dbReference type="CDD" id="cd05797">
    <property type="entry name" value="Ribosomal_L10"/>
    <property type="match status" value="1"/>
</dbReference>
<dbReference type="FunFam" id="3.30.70.1730:FF:000001">
    <property type="entry name" value="50S ribosomal protein L10"/>
    <property type="match status" value="1"/>
</dbReference>
<dbReference type="Gene3D" id="3.30.70.1730">
    <property type="match status" value="1"/>
</dbReference>
<dbReference type="Gene3D" id="6.10.250.2350">
    <property type="match status" value="1"/>
</dbReference>
<dbReference type="HAMAP" id="MF_00362">
    <property type="entry name" value="Ribosomal_uL10"/>
    <property type="match status" value="1"/>
</dbReference>
<dbReference type="InterPro" id="IPR001790">
    <property type="entry name" value="Ribosomal_uL10"/>
</dbReference>
<dbReference type="InterPro" id="IPR043141">
    <property type="entry name" value="Ribosomal_uL10-like_sf"/>
</dbReference>
<dbReference type="InterPro" id="IPR022973">
    <property type="entry name" value="Ribosomal_uL10_bac"/>
</dbReference>
<dbReference type="InterPro" id="IPR047865">
    <property type="entry name" value="Ribosomal_uL10_bac_type"/>
</dbReference>
<dbReference type="InterPro" id="IPR002363">
    <property type="entry name" value="Ribosomal_uL10_CS_bac"/>
</dbReference>
<dbReference type="NCBIfam" id="NF000955">
    <property type="entry name" value="PRK00099.1-1"/>
    <property type="match status" value="1"/>
</dbReference>
<dbReference type="PANTHER" id="PTHR11560">
    <property type="entry name" value="39S RIBOSOMAL PROTEIN L10, MITOCHONDRIAL"/>
    <property type="match status" value="1"/>
</dbReference>
<dbReference type="Pfam" id="PF00466">
    <property type="entry name" value="Ribosomal_L10"/>
    <property type="match status" value="1"/>
</dbReference>
<dbReference type="SUPFAM" id="SSF160369">
    <property type="entry name" value="Ribosomal protein L10-like"/>
    <property type="match status" value="1"/>
</dbReference>
<dbReference type="PROSITE" id="PS01109">
    <property type="entry name" value="RIBOSOMAL_L10"/>
    <property type="match status" value="1"/>
</dbReference>
<accession>Q9KV32</accession>
<comment type="function">
    <text evidence="1">Forms part of the ribosomal stalk, playing a central role in the interaction of the ribosome with GTP-bound translation factors.</text>
</comment>
<comment type="subunit">
    <text evidence="1">Part of the ribosomal stalk of the 50S ribosomal subunit. The N-terminus interacts with L11 and the large rRNA to form the base of the stalk. The C-terminus forms an elongated spine to which L12 dimers bind in a sequential fashion forming a multimeric L10(L12)X complex (By similarity).</text>
</comment>
<comment type="similarity">
    <text evidence="2">Belongs to the universal ribosomal protein uL10 family.</text>
</comment>